<reference key="1">
    <citation type="journal article" date="1995" name="Mol. Microbiol.">
        <title>Salmonella typhimurium secreted invasion determinants are homologous to Shigella Ipa proteins.</title>
        <authorList>
            <person name="Hueck C.J."/>
            <person name="Hantman M.J."/>
            <person name="Bajaj V."/>
            <person name="Johnston C."/>
            <person name="Lee C.A."/>
            <person name="Miller S.I."/>
        </authorList>
    </citation>
    <scope>NUCLEOTIDE SEQUENCE [GENOMIC DNA]</scope>
    <source>
        <strain>SL1344</strain>
    </source>
</reference>
<reference key="2">
    <citation type="journal article" date="1995" name="J. Bacteriol.">
        <title>Identification of two targets of the type III protein secretion system encoded by the inv and spa loci of Salmonella typhimurium that have homology to the Shigella IpaD and IpaA proteins.</title>
        <authorList>
            <person name="Kaniga K."/>
            <person name="Trollinger D."/>
            <person name="Galan J.E."/>
        </authorList>
    </citation>
    <scope>NUCLEOTIDE SEQUENCE [GENOMIC DNA]</scope>
    <scope>FUNCTION</scope>
    <scope>SUBCELLULAR LOCATION</scope>
    <source>
        <strain>SL1344</strain>
    </source>
</reference>
<reference key="3">
    <citation type="journal article" date="2001" name="Nature">
        <title>Complete genome sequence of Salmonella enterica serovar Typhimurium LT2.</title>
        <authorList>
            <person name="McClelland M."/>
            <person name="Sanderson K.E."/>
            <person name="Spieth J."/>
            <person name="Clifton S.W."/>
            <person name="Latreille P."/>
            <person name="Courtney L."/>
            <person name="Porwollik S."/>
            <person name="Ali J."/>
            <person name="Dante M."/>
            <person name="Du F."/>
            <person name="Hou S."/>
            <person name="Layman D."/>
            <person name="Leonard S."/>
            <person name="Nguyen C."/>
            <person name="Scott K."/>
            <person name="Holmes A."/>
            <person name="Grewal N."/>
            <person name="Mulvaney E."/>
            <person name="Ryan E."/>
            <person name="Sun H."/>
            <person name="Florea L."/>
            <person name="Miller W."/>
            <person name="Stoneking T."/>
            <person name="Nhan M."/>
            <person name="Waterston R."/>
            <person name="Wilson R.K."/>
        </authorList>
    </citation>
    <scope>NUCLEOTIDE SEQUENCE [LARGE SCALE GENOMIC DNA]</scope>
    <source>
        <strain>LT2 / SGSC1412 / ATCC 700720</strain>
    </source>
</reference>
<reference key="4">
    <citation type="journal article" date="1997" name="Mol. Microbiol.">
        <title>The invasion-associated type III system of Salmonella typhimurium directs the translocation of Sip proteins into the host cell.</title>
        <authorList>
            <person name="Collazo C.M."/>
            <person name="Galan J.E."/>
        </authorList>
    </citation>
    <scope>FUNCTION</scope>
    <source>
        <strain>SL1344</strain>
    </source>
</reference>
<reference key="5">
    <citation type="journal article" date="2000" name="Mol. Microbiol.">
        <title>The putative invasion protein chaperone SicA acts together with InvF to activate the expression of Salmonella typhimurium virulence genes.</title>
        <authorList>
            <person name="Darwin K.H."/>
            <person name="Miller V.L."/>
        </authorList>
    </citation>
    <scope>REGULATION BY SICA AND INVF</scope>
    <source>
        <strain>ATCC 14028s / SGSG 2262</strain>
        <strain>LT2</strain>
        <strain>SL1344</strain>
    </source>
</reference>
<reference key="6">
    <citation type="journal article" date="2002" name="J. Bacteriol.">
        <title>Salmonella type III secretion-associated protein InvE controls translocation of effector proteins into host cells.</title>
        <authorList>
            <person name="Kubori T."/>
            <person name="Galan J.E."/>
        </authorList>
    </citation>
    <scope>REGULATION BY INVE</scope>
</reference>
<keyword id="KW-0002">3D-structure</keyword>
<keyword id="KW-0175">Coiled coil</keyword>
<keyword id="KW-1185">Reference proteome</keyword>
<keyword id="KW-0964">Secreted</keyword>
<keyword id="KW-0843">Virulence</keyword>
<sequence>MLNIQNYSASPHPGIVAERPQTPSASEHVETAVVPSTTEHRGTDIISLSQAATKIHQAQQTLQSTPPISEENNDERTLARQQLTSSLNALAKSGVSLSAEQNENLRSAFSAPTSALFSASPMAQPRTTISDAEIWDMVSQNISAIGDSYLGVYENVVAVYTDFYQAFSDILSKMGGWLLPGKDGNTVKLDVTSLKNDLNSLVNKYNQINSNTVLFPAQSGSGVKVATEAEARQWLSELNLPNSCLKSYGSGYVVTVDLTPLQKMVQDIDGLGAPGKDSKLEMDNAKYQAWQSGFKAQEENMKTTLQTLTQKYSNANSLYDNLVKVLSSTISSSLETAKSFLQG</sequence>
<evidence type="ECO:0000250" key="1"/>
<evidence type="ECO:0000255" key="2"/>
<evidence type="ECO:0000256" key="3">
    <source>
        <dbReference type="SAM" id="MobiDB-lite"/>
    </source>
</evidence>
<evidence type="ECO:0000269" key="4">
    <source>
    </source>
</evidence>
<evidence type="ECO:0000269" key="5">
    <source>
    </source>
</evidence>
<evidence type="ECO:0000305" key="6"/>
<evidence type="ECO:0007829" key="7">
    <source>
        <dbReference type="PDB" id="2YM9"/>
    </source>
</evidence>
<evidence type="ECO:0007829" key="8">
    <source>
        <dbReference type="PDB" id="3NZZ"/>
    </source>
</evidence>
<evidence type="ECO:0007829" key="9">
    <source>
        <dbReference type="PDB" id="3ZQE"/>
    </source>
</evidence>
<feature type="chain" id="PRO_0000219865" description="Cell invasion protein SipD">
    <location>
        <begin position="1"/>
        <end position="343"/>
    </location>
</feature>
<feature type="region of interest" description="Disordered" evidence="3">
    <location>
        <begin position="1"/>
        <end position="26"/>
    </location>
</feature>
<feature type="coiled-coil region" evidence="2">
    <location>
        <begin position="295"/>
        <end position="322"/>
    </location>
</feature>
<feature type="sequence conflict" description="In Ref. 2; AAA86617." evidence="6" ref="2">
    <original>S</original>
    <variation>A</variation>
    <location>
        <position position="292"/>
    </location>
</feature>
<feature type="helix" evidence="8">
    <location>
        <begin position="41"/>
        <end position="64"/>
    </location>
</feature>
<feature type="helix" evidence="8">
    <location>
        <begin position="70"/>
        <end position="92"/>
    </location>
</feature>
<feature type="helix" evidence="8">
    <location>
        <begin position="99"/>
        <end position="108"/>
    </location>
</feature>
<feature type="turn" evidence="8">
    <location>
        <begin position="115"/>
        <end position="117"/>
    </location>
</feature>
<feature type="helix" evidence="8">
    <location>
        <begin position="133"/>
        <end position="148"/>
    </location>
</feature>
<feature type="helix" evidence="8">
    <location>
        <begin position="150"/>
        <end position="171"/>
    </location>
</feature>
<feature type="helix" evidence="8">
    <location>
        <begin position="172"/>
        <end position="177"/>
    </location>
</feature>
<feature type="strand" evidence="8">
    <location>
        <begin position="178"/>
        <end position="180"/>
    </location>
</feature>
<feature type="helix" evidence="9">
    <location>
        <begin position="182"/>
        <end position="184"/>
    </location>
</feature>
<feature type="strand" evidence="8">
    <location>
        <begin position="186"/>
        <end position="189"/>
    </location>
</feature>
<feature type="helix" evidence="8">
    <location>
        <begin position="191"/>
        <end position="205"/>
    </location>
</feature>
<feature type="turn" evidence="8">
    <location>
        <begin position="210"/>
        <end position="212"/>
    </location>
</feature>
<feature type="strand" evidence="8">
    <location>
        <begin position="213"/>
        <end position="216"/>
    </location>
</feature>
<feature type="strand" evidence="8">
    <location>
        <begin position="220"/>
        <end position="222"/>
    </location>
</feature>
<feature type="helix" evidence="8">
    <location>
        <begin position="228"/>
        <end position="238"/>
    </location>
</feature>
<feature type="helix" evidence="8">
    <location>
        <begin position="242"/>
        <end position="244"/>
    </location>
</feature>
<feature type="strand" evidence="8">
    <location>
        <begin position="245"/>
        <end position="248"/>
    </location>
</feature>
<feature type="strand" evidence="8">
    <location>
        <begin position="251"/>
        <end position="255"/>
    </location>
</feature>
<feature type="helix" evidence="8">
    <location>
        <begin position="259"/>
        <end position="270"/>
    </location>
</feature>
<feature type="strand" evidence="7">
    <location>
        <begin position="275"/>
        <end position="278"/>
    </location>
</feature>
<feature type="strand" evidence="8">
    <location>
        <begin position="280"/>
        <end position="283"/>
    </location>
</feature>
<feature type="helix" evidence="8">
    <location>
        <begin position="284"/>
        <end position="338"/>
    </location>
</feature>
<feature type="helix" evidence="7">
    <location>
        <begin position="339"/>
        <end position="342"/>
    </location>
</feature>
<accession>Q56026</accession>
<accession>Q56033</accession>
<accession>Q7CPX2</accession>
<protein>
    <recommendedName>
        <fullName>Cell invasion protein SipD</fullName>
    </recommendedName>
    <alternativeName>
        <fullName>Salmonella invasion protein D</fullName>
    </alternativeName>
</protein>
<organism>
    <name type="scientific">Salmonella typhimurium (strain LT2 / SGSC1412 / ATCC 700720)</name>
    <dbReference type="NCBI Taxonomy" id="99287"/>
    <lineage>
        <taxon>Bacteria</taxon>
        <taxon>Pseudomonadati</taxon>
        <taxon>Pseudomonadota</taxon>
        <taxon>Gammaproteobacteria</taxon>
        <taxon>Enterobacterales</taxon>
        <taxon>Enterobacteriaceae</taxon>
        <taxon>Salmonella</taxon>
    </lineage>
</organism>
<dbReference type="EMBL" id="U30491">
    <property type="protein sequence ID" value="AAC43548.1"/>
    <property type="molecule type" value="Genomic_DNA"/>
</dbReference>
<dbReference type="EMBL" id="U40013">
    <property type="protein sequence ID" value="AAA86617.1"/>
    <property type="status" value="ALT_FRAME"/>
    <property type="molecule type" value="Genomic_DNA"/>
</dbReference>
<dbReference type="EMBL" id="AE006468">
    <property type="protein sequence ID" value="AAL21763.1"/>
    <property type="molecule type" value="Genomic_DNA"/>
</dbReference>
<dbReference type="PIR" id="S70549">
    <property type="entry name" value="S70549"/>
</dbReference>
<dbReference type="RefSeq" id="NP_461804.1">
    <property type="nucleotide sequence ID" value="NC_003197.2"/>
</dbReference>
<dbReference type="RefSeq" id="WP_000932246.1">
    <property type="nucleotide sequence ID" value="NC_003197.2"/>
</dbReference>
<dbReference type="PDB" id="2YM0">
    <property type="method" value="X-ray"/>
    <property type="resolution" value="3.00 A"/>
    <property type="chains" value="A/B=132-343"/>
</dbReference>
<dbReference type="PDB" id="2YM9">
    <property type="method" value="X-ray"/>
    <property type="resolution" value="3.00 A"/>
    <property type="chains" value="A/B/C/D=1-343"/>
</dbReference>
<dbReference type="PDB" id="3NZZ">
    <property type="method" value="X-ray"/>
    <property type="resolution" value="1.65 A"/>
    <property type="chains" value="A/B=39-343"/>
</dbReference>
<dbReference type="PDB" id="3O00">
    <property type="method" value="X-ray"/>
    <property type="resolution" value="1.85 A"/>
    <property type="chains" value="A/B=39-343"/>
</dbReference>
<dbReference type="PDB" id="3O01">
    <property type="method" value="X-ray"/>
    <property type="resolution" value="1.90 A"/>
    <property type="chains" value="A/B=39-343"/>
</dbReference>
<dbReference type="PDB" id="3O02">
    <property type="method" value="X-ray"/>
    <property type="resolution" value="1.90 A"/>
    <property type="chains" value="A/B=39-343"/>
</dbReference>
<dbReference type="PDB" id="3ZQB">
    <property type="method" value="X-ray"/>
    <property type="resolution" value="2.40 A"/>
    <property type="chains" value="A/B=127-343"/>
</dbReference>
<dbReference type="PDB" id="3ZQE">
    <property type="method" value="X-ray"/>
    <property type="resolution" value="2.19 A"/>
    <property type="chains" value="A/B=127-343"/>
</dbReference>
<dbReference type="PDB" id="7RYE">
    <property type="method" value="EM"/>
    <property type="resolution" value="3.90 A"/>
    <property type="chains" value="F/O/R/V/X=1-343"/>
</dbReference>
<dbReference type="PDBsum" id="2YM0"/>
<dbReference type="PDBsum" id="2YM9"/>
<dbReference type="PDBsum" id="3NZZ"/>
<dbReference type="PDBsum" id="3O00"/>
<dbReference type="PDBsum" id="3O01"/>
<dbReference type="PDBsum" id="3O02"/>
<dbReference type="PDBsum" id="3ZQB"/>
<dbReference type="PDBsum" id="3ZQE"/>
<dbReference type="PDBsum" id="7RYE"/>
<dbReference type="BMRB" id="Q56026"/>
<dbReference type="SMR" id="Q56026"/>
<dbReference type="STRING" id="99287.STM2883"/>
<dbReference type="TCDB" id="1.C.36.3.2">
    <property type="family name" value="the bacterial type iii-target cell pore (iiitcp) family"/>
</dbReference>
<dbReference type="PaxDb" id="99287-STM2883"/>
<dbReference type="GeneID" id="1254406"/>
<dbReference type="KEGG" id="stm:STM2883"/>
<dbReference type="PATRIC" id="fig|99287.12.peg.3039"/>
<dbReference type="HOGENOM" id="CLU_069613_0_0_6"/>
<dbReference type="OMA" id="QMANWIK"/>
<dbReference type="BioCyc" id="SENT99287:STM2883-MONOMER"/>
<dbReference type="EvolutionaryTrace" id="Q56026"/>
<dbReference type="Proteomes" id="UP000001014">
    <property type="component" value="Chromosome"/>
</dbReference>
<dbReference type="GO" id="GO:0005576">
    <property type="term" value="C:extracellular region"/>
    <property type="evidence" value="ECO:0007669"/>
    <property type="project" value="UniProtKB-SubCell"/>
</dbReference>
<dbReference type="DisProt" id="DP02796"/>
<dbReference type="Gene3D" id="1.20.1710.10">
    <property type="entry name" value="IpaD-like"/>
    <property type="match status" value="1"/>
</dbReference>
<dbReference type="InterPro" id="IPR036708">
    <property type="entry name" value="BipD-like_sf"/>
</dbReference>
<dbReference type="InterPro" id="IPR009483">
    <property type="entry name" value="IpaD/BipD/SipD"/>
</dbReference>
<dbReference type="NCBIfam" id="NF011858">
    <property type="entry name" value="PRK15330.1"/>
    <property type="match status" value="1"/>
</dbReference>
<dbReference type="NCBIfam" id="TIGR02553">
    <property type="entry name" value="SipD_IpaD_SspD"/>
    <property type="match status" value="1"/>
</dbReference>
<dbReference type="Pfam" id="PF06511">
    <property type="entry name" value="T3SS_TC"/>
    <property type="match status" value="1"/>
</dbReference>
<dbReference type="SUPFAM" id="SSF140693">
    <property type="entry name" value="IpaD-like"/>
    <property type="match status" value="1"/>
</dbReference>
<proteinExistence type="evidence at protein level"/>
<name>SIPD_SALTY</name>
<comment type="function">
    <text evidence="4 5">Required for translocation of effector proteins via the type III secretion system SPI-1, which is essential for an efficient bacterial internalization. Probably acts by modulating the secretion of SipA, SipB, and SipC.</text>
</comment>
<comment type="subcellular location">
    <subcellularLocation>
        <location evidence="4">Secreted</location>
    </subcellularLocation>
    <text>Secreted via the type III secretion system 1 (SPI-1 T3SS).</text>
</comment>
<comment type="induction">
    <text>Transcriptionally regulated by SicA and InvF. Also regulated by InvE.</text>
</comment>
<comment type="domain">
    <text evidence="1">The N-terminal domain is an intra-molecular chaperone that prevents premature oligomerization of the residues on the coiled-coil region that are involved in interactions with the needle and/or itself. The residues in the C-terminal domain probably form oligomeric structures at the tip of the needle that are responsible for the regulation of secretion of other effectors (By similarity).</text>
</comment>
<comment type="similarity">
    <text evidence="6">Belongs to the invasin protein D family.</text>
</comment>
<comment type="sequence caution" evidence="6">
    <conflict type="frameshift">
        <sequence resource="EMBL-CDS" id="AAA86617"/>
    </conflict>
</comment>
<gene>
    <name type="primary">sipD</name>
    <name type="synonym">sspD</name>
    <name type="ordered locus">STM2883</name>
</gene>